<reference key="1">
    <citation type="journal article" date="2009" name="PLoS Genet.">
        <title>Organised genome dynamics in the Escherichia coli species results in highly diverse adaptive paths.</title>
        <authorList>
            <person name="Touchon M."/>
            <person name="Hoede C."/>
            <person name="Tenaillon O."/>
            <person name="Barbe V."/>
            <person name="Baeriswyl S."/>
            <person name="Bidet P."/>
            <person name="Bingen E."/>
            <person name="Bonacorsi S."/>
            <person name="Bouchier C."/>
            <person name="Bouvet O."/>
            <person name="Calteau A."/>
            <person name="Chiapello H."/>
            <person name="Clermont O."/>
            <person name="Cruveiller S."/>
            <person name="Danchin A."/>
            <person name="Diard M."/>
            <person name="Dossat C."/>
            <person name="Karoui M.E."/>
            <person name="Frapy E."/>
            <person name="Garry L."/>
            <person name="Ghigo J.M."/>
            <person name="Gilles A.M."/>
            <person name="Johnson J."/>
            <person name="Le Bouguenec C."/>
            <person name="Lescat M."/>
            <person name="Mangenot S."/>
            <person name="Martinez-Jehanne V."/>
            <person name="Matic I."/>
            <person name="Nassif X."/>
            <person name="Oztas S."/>
            <person name="Petit M.A."/>
            <person name="Pichon C."/>
            <person name="Rouy Z."/>
            <person name="Ruf C.S."/>
            <person name="Schneider D."/>
            <person name="Tourret J."/>
            <person name="Vacherie B."/>
            <person name="Vallenet D."/>
            <person name="Medigue C."/>
            <person name="Rocha E.P.C."/>
            <person name="Denamur E."/>
        </authorList>
    </citation>
    <scope>NUCLEOTIDE SEQUENCE [LARGE SCALE GENOMIC DNA]</scope>
    <source>
        <strain>IAI1</strain>
    </source>
</reference>
<evidence type="ECO:0000255" key="1">
    <source>
        <dbReference type="HAMAP-Rule" id="MF_00801"/>
    </source>
</evidence>
<gene>
    <name evidence="1" type="primary">nfi</name>
    <name type="ordered locus">ECIAI1_4213</name>
</gene>
<comment type="function">
    <text evidence="1">DNA repair enzyme involved in the repair of deaminated bases. Selectively cleaves double-stranded DNA at the second phosphodiester bond 3' to a deoxyinosine leaving behind the intact lesion on the nicked DNA.</text>
</comment>
<comment type="catalytic activity">
    <reaction evidence="1">
        <text>Endonucleolytic cleavage at apurinic or apyrimidinic sites to products with a 5'-phosphate.</text>
        <dbReference type="EC" id="3.1.21.7"/>
    </reaction>
</comment>
<comment type="cofactor">
    <cofactor evidence="1">
        <name>Mg(2+)</name>
        <dbReference type="ChEBI" id="CHEBI:18420"/>
    </cofactor>
</comment>
<comment type="subcellular location">
    <subcellularLocation>
        <location evidence="1">Cytoplasm</location>
    </subcellularLocation>
</comment>
<comment type="similarity">
    <text evidence="1">Belongs to the endonuclease V family.</text>
</comment>
<sequence>MDLASLRAQQIELASSVIREDRLDKDPPDLIAGADVGFEQGGEVTRAAMVLLKYPSLELVEYKVARIATTMPYIPGFLSFREYPALLAAWEMLSQKPDLVFVDGHGISHPRRLGVASHFGLLVDVPTIGVAKKRLCGKFEPLSSEPGALAPLMDKGEQLAWVWRSKARCNPLFIATGHRVSVDSALAWVQRCMKGYRLPEPTRWADAVASERPAFVRYTANQP</sequence>
<name>NFI_ECO8A</name>
<organism>
    <name type="scientific">Escherichia coli O8 (strain IAI1)</name>
    <dbReference type="NCBI Taxonomy" id="585034"/>
    <lineage>
        <taxon>Bacteria</taxon>
        <taxon>Pseudomonadati</taxon>
        <taxon>Pseudomonadota</taxon>
        <taxon>Gammaproteobacteria</taxon>
        <taxon>Enterobacterales</taxon>
        <taxon>Enterobacteriaceae</taxon>
        <taxon>Escherichia</taxon>
    </lineage>
</organism>
<accession>B7M7Q7</accession>
<dbReference type="EC" id="3.1.21.7" evidence="1"/>
<dbReference type="EMBL" id="CU928160">
    <property type="protein sequence ID" value="CAR00972.1"/>
    <property type="molecule type" value="Genomic_DNA"/>
</dbReference>
<dbReference type="RefSeq" id="WP_000362388.1">
    <property type="nucleotide sequence ID" value="NC_011741.1"/>
</dbReference>
<dbReference type="SMR" id="B7M7Q7"/>
<dbReference type="GeneID" id="75169444"/>
<dbReference type="KEGG" id="ecr:ECIAI1_4213"/>
<dbReference type="HOGENOM" id="CLU_047631_1_0_6"/>
<dbReference type="GO" id="GO:0005737">
    <property type="term" value="C:cytoplasm"/>
    <property type="evidence" value="ECO:0007669"/>
    <property type="project" value="UniProtKB-SubCell"/>
</dbReference>
<dbReference type="GO" id="GO:0043737">
    <property type="term" value="F:deoxyribonuclease V activity"/>
    <property type="evidence" value="ECO:0007669"/>
    <property type="project" value="UniProtKB-UniRule"/>
</dbReference>
<dbReference type="GO" id="GO:0000287">
    <property type="term" value="F:magnesium ion binding"/>
    <property type="evidence" value="ECO:0007669"/>
    <property type="project" value="UniProtKB-UniRule"/>
</dbReference>
<dbReference type="GO" id="GO:0016891">
    <property type="term" value="F:RNA endonuclease activity, producing 5'-phosphomonoesters"/>
    <property type="evidence" value="ECO:0007669"/>
    <property type="project" value="TreeGrafter"/>
</dbReference>
<dbReference type="GO" id="GO:0003727">
    <property type="term" value="F:single-stranded RNA binding"/>
    <property type="evidence" value="ECO:0007669"/>
    <property type="project" value="TreeGrafter"/>
</dbReference>
<dbReference type="GO" id="GO:0006281">
    <property type="term" value="P:DNA repair"/>
    <property type="evidence" value="ECO:0007669"/>
    <property type="project" value="UniProtKB-UniRule"/>
</dbReference>
<dbReference type="CDD" id="cd06559">
    <property type="entry name" value="Endonuclease_V"/>
    <property type="match status" value="1"/>
</dbReference>
<dbReference type="FunFam" id="3.30.2170.10:FF:000001">
    <property type="entry name" value="Endonuclease V"/>
    <property type="match status" value="1"/>
</dbReference>
<dbReference type="Gene3D" id="3.30.2170.10">
    <property type="entry name" value="archaeoglobus fulgidus dsm 4304 superfamily"/>
    <property type="match status" value="1"/>
</dbReference>
<dbReference type="HAMAP" id="MF_00801">
    <property type="entry name" value="Endonuclease_5"/>
    <property type="match status" value="1"/>
</dbReference>
<dbReference type="InterPro" id="IPR007581">
    <property type="entry name" value="Endonuclease-V"/>
</dbReference>
<dbReference type="NCBIfam" id="NF008629">
    <property type="entry name" value="PRK11617.1"/>
    <property type="match status" value="1"/>
</dbReference>
<dbReference type="PANTHER" id="PTHR28511">
    <property type="entry name" value="ENDONUCLEASE V"/>
    <property type="match status" value="1"/>
</dbReference>
<dbReference type="PANTHER" id="PTHR28511:SF1">
    <property type="entry name" value="ENDONUCLEASE V"/>
    <property type="match status" value="1"/>
</dbReference>
<dbReference type="Pfam" id="PF04493">
    <property type="entry name" value="Endonuclease_5"/>
    <property type="match status" value="1"/>
</dbReference>
<keyword id="KW-0963">Cytoplasm</keyword>
<keyword id="KW-0227">DNA damage</keyword>
<keyword id="KW-0234">DNA repair</keyword>
<keyword id="KW-0255">Endonuclease</keyword>
<keyword id="KW-0378">Hydrolase</keyword>
<keyword id="KW-0460">Magnesium</keyword>
<keyword id="KW-0479">Metal-binding</keyword>
<keyword id="KW-0540">Nuclease</keyword>
<proteinExistence type="inferred from homology"/>
<protein>
    <recommendedName>
        <fullName evidence="1">Endonuclease V</fullName>
        <ecNumber evidence="1">3.1.21.7</ecNumber>
    </recommendedName>
    <alternativeName>
        <fullName evidence="1">Deoxyinosine 3'endonuclease</fullName>
    </alternativeName>
    <alternativeName>
        <fullName evidence="1">Deoxyribonuclease V</fullName>
        <shortName evidence="1">DNase V</shortName>
    </alternativeName>
</protein>
<feature type="chain" id="PRO_1000133873" description="Endonuclease V">
    <location>
        <begin position="1"/>
        <end position="223"/>
    </location>
</feature>
<feature type="binding site" evidence="1">
    <location>
        <position position="35"/>
    </location>
    <ligand>
        <name>Mg(2+)</name>
        <dbReference type="ChEBI" id="CHEBI:18420"/>
    </ligand>
</feature>
<feature type="binding site" evidence="1">
    <location>
        <position position="103"/>
    </location>
    <ligand>
        <name>Mg(2+)</name>
        <dbReference type="ChEBI" id="CHEBI:18420"/>
    </ligand>
</feature>
<feature type="site" description="Interaction with target DNA" evidence="1">
    <location>
        <position position="73"/>
    </location>
</feature>